<keyword id="KW-0004">4Fe-4S</keyword>
<keyword id="KW-0067">ATP-binding</keyword>
<keyword id="KW-0963">Cytoplasm</keyword>
<keyword id="KW-0408">Iron</keyword>
<keyword id="KW-0411">Iron-sulfur</keyword>
<keyword id="KW-0460">Magnesium</keyword>
<keyword id="KW-0479">Metal-binding</keyword>
<keyword id="KW-0547">Nucleotide-binding</keyword>
<keyword id="KW-0694">RNA-binding</keyword>
<keyword id="KW-0808">Transferase</keyword>
<keyword id="KW-0819">tRNA processing</keyword>
<keyword id="KW-0820">tRNA-binding</keyword>
<proteinExistence type="inferred from homology"/>
<organism>
    <name type="scientific">Francisella tularensis subsp. tularensis (strain FSC 198)</name>
    <dbReference type="NCBI Taxonomy" id="393115"/>
    <lineage>
        <taxon>Bacteria</taxon>
        <taxon>Pseudomonadati</taxon>
        <taxon>Pseudomonadota</taxon>
        <taxon>Gammaproteobacteria</taxon>
        <taxon>Thiotrichales</taxon>
        <taxon>Francisellaceae</taxon>
        <taxon>Francisella</taxon>
    </lineage>
</organism>
<evidence type="ECO:0000255" key="1">
    <source>
        <dbReference type="HAMAP-Rule" id="MF_01850"/>
    </source>
</evidence>
<protein>
    <recommendedName>
        <fullName evidence="1">tRNA-cytidine(32) 2-sulfurtransferase 1</fullName>
        <ecNumber evidence="1">2.8.1.-</ecNumber>
    </recommendedName>
    <alternativeName>
        <fullName evidence="1">Two-thiocytidine biosynthesis protein A 1</fullName>
    </alternativeName>
    <alternativeName>
        <fullName evidence="1">tRNA 2-thiocytidine biosynthesis protein TtcA 1</fullName>
    </alternativeName>
</protein>
<name>TTCA1_FRAT1</name>
<gene>
    <name evidence="1" type="primary">ttcA1</name>
    <name type="ordered locus">FTF1042</name>
</gene>
<feature type="chain" id="PRO_0000348740" description="tRNA-cytidine(32) 2-sulfurtransferase 1">
    <location>
        <begin position="1"/>
        <end position="267"/>
    </location>
</feature>
<feature type="short sequence motif" description="PP-loop motif" evidence="1">
    <location>
        <begin position="42"/>
        <end position="47"/>
    </location>
</feature>
<feature type="binding site" evidence="1">
    <location>
        <position position="117"/>
    </location>
    <ligand>
        <name>[4Fe-4S] cluster</name>
        <dbReference type="ChEBI" id="CHEBI:49883"/>
    </ligand>
</feature>
<feature type="binding site" evidence="1">
    <location>
        <position position="120"/>
    </location>
    <ligand>
        <name>[4Fe-4S] cluster</name>
        <dbReference type="ChEBI" id="CHEBI:49883"/>
    </ligand>
</feature>
<feature type="binding site" evidence="1">
    <location>
        <position position="208"/>
    </location>
    <ligand>
        <name>[4Fe-4S] cluster</name>
        <dbReference type="ChEBI" id="CHEBI:49883"/>
    </ligand>
</feature>
<sequence>MTNNTDKQTLKKLERQILRKTAQAINQYNMIEDGDKIMVCLSGGKDSYCLLEMLLLLQKKAPISFEIIAVNLDQKQPGFPEEVLPNYLKNKGVEFHIIERDTYSIVKRVIPEGKTTCGLCSRMRRGILYDFAEENNVTKVALGHHRDDIIETFFLNLFYNGSIKAMPAKLLSDDKRNIVIRPLAFVSEKETLEYSQLKEFPIIPCNLCGSQDNLQRVFIKDMLNRWEQNNPERKNVIFKALSNISPSQMLDKELFDFINISKDDIQR</sequence>
<dbReference type="EC" id="2.8.1.-" evidence="1"/>
<dbReference type="EMBL" id="AM286280">
    <property type="protein sequence ID" value="CAL09058.1"/>
    <property type="molecule type" value="Genomic_DNA"/>
</dbReference>
<dbReference type="SMR" id="Q14HG9"/>
<dbReference type="KEGG" id="ftf:FTF1042"/>
<dbReference type="HOGENOM" id="CLU_026481_0_0_6"/>
<dbReference type="GO" id="GO:0005737">
    <property type="term" value="C:cytoplasm"/>
    <property type="evidence" value="ECO:0007669"/>
    <property type="project" value="UniProtKB-SubCell"/>
</dbReference>
<dbReference type="GO" id="GO:0051539">
    <property type="term" value="F:4 iron, 4 sulfur cluster binding"/>
    <property type="evidence" value="ECO:0007669"/>
    <property type="project" value="UniProtKB-UniRule"/>
</dbReference>
<dbReference type="GO" id="GO:0005524">
    <property type="term" value="F:ATP binding"/>
    <property type="evidence" value="ECO:0007669"/>
    <property type="project" value="UniProtKB-UniRule"/>
</dbReference>
<dbReference type="GO" id="GO:0000287">
    <property type="term" value="F:magnesium ion binding"/>
    <property type="evidence" value="ECO:0007669"/>
    <property type="project" value="UniProtKB-UniRule"/>
</dbReference>
<dbReference type="GO" id="GO:0016783">
    <property type="term" value="F:sulfurtransferase activity"/>
    <property type="evidence" value="ECO:0007669"/>
    <property type="project" value="UniProtKB-UniRule"/>
</dbReference>
<dbReference type="GO" id="GO:0000049">
    <property type="term" value="F:tRNA binding"/>
    <property type="evidence" value="ECO:0007669"/>
    <property type="project" value="UniProtKB-KW"/>
</dbReference>
<dbReference type="GO" id="GO:0034227">
    <property type="term" value="P:tRNA thio-modification"/>
    <property type="evidence" value="ECO:0007669"/>
    <property type="project" value="UniProtKB-UniRule"/>
</dbReference>
<dbReference type="CDD" id="cd24138">
    <property type="entry name" value="TtcA-like"/>
    <property type="match status" value="1"/>
</dbReference>
<dbReference type="Gene3D" id="3.40.50.620">
    <property type="entry name" value="HUPs"/>
    <property type="match status" value="1"/>
</dbReference>
<dbReference type="HAMAP" id="MF_01850">
    <property type="entry name" value="TtcA"/>
    <property type="match status" value="1"/>
</dbReference>
<dbReference type="InterPro" id="IPR014729">
    <property type="entry name" value="Rossmann-like_a/b/a_fold"/>
</dbReference>
<dbReference type="InterPro" id="IPR011063">
    <property type="entry name" value="TilS/TtcA_N"/>
</dbReference>
<dbReference type="InterPro" id="IPR012089">
    <property type="entry name" value="tRNA_Cyd_32_2_STrfase"/>
</dbReference>
<dbReference type="InterPro" id="IPR035107">
    <property type="entry name" value="tRNA_thiolation_TtcA_Ctu1"/>
</dbReference>
<dbReference type="NCBIfam" id="NF007972">
    <property type="entry name" value="PRK10696.1"/>
    <property type="match status" value="1"/>
</dbReference>
<dbReference type="PANTHER" id="PTHR43686:SF1">
    <property type="entry name" value="AMINOTRAN_5 DOMAIN-CONTAINING PROTEIN"/>
    <property type="match status" value="1"/>
</dbReference>
<dbReference type="PANTHER" id="PTHR43686">
    <property type="entry name" value="SULFURTRANSFERASE-RELATED"/>
    <property type="match status" value="1"/>
</dbReference>
<dbReference type="Pfam" id="PF01171">
    <property type="entry name" value="ATP_bind_3"/>
    <property type="match status" value="1"/>
</dbReference>
<dbReference type="PIRSF" id="PIRSF004976">
    <property type="entry name" value="ATPase_YdaO"/>
    <property type="match status" value="1"/>
</dbReference>
<dbReference type="SUPFAM" id="SSF52402">
    <property type="entry name" value="Adenine nucleotide alpha hydrolases-like"/>
    <property type="match status" value="1"/>
</dbReference>
<comment type="function">
    <text evidence="1">Catalyzes the ATP-dependent 2-thiolation of cytidine in position 32 of tRNA, to form 2-thiocytidine (s(2)C32). The sulfur atoms are provided by the cysteine/cysteine desulfurase (IscS) system.</text>
</comment>
<comment type="catalytic activity">
    <reaction evidence="1">
        <text>cytidine(32) in tRNA + S-sulfanyl-L-cysteinyl-[cysteine desulfurase] + AH2 + ATP = 2-thiocytidine(32) in tRNA + L-cysteinyl-[cysteine desulfurase] + A + AMP + diphosphate + H(+)</text>
        <dbReference type="Rhea" id="RHEA:57048"/>
        <dbReference type="Rhea" id="RHEA-COMP:10288"/>
        <dbReference type="Rhea" id="RHEA-COMP:12157"/>
        <dbReference type="Rhea" id="RHEA-COMP:12158"/>
        <dbReference type="Rhea" id="RHEA-COMP:14821"/>
        <dbReference type="ChEBI" id="CHEBI:13193"/>
        <dbReference type="ChEBI" id="CHEBI:15378"/>
        <dbReference type="ChEBI" id="CHEBI:17499"/>
        <dbReference type="ChEBI" id="CHEBI:29950"/>
        <dbReference type="ChEBI" id="CHEBI:30616"/>
        <dbReference type="ChEBI" id="CHEBI:33019"/>
        <dbReference type="ChEBI" id="CHEBI:61963"/>
        <dbReference type="ChEBI" id="CHEBI:82748"/>
        <dbReference type="ChEBI" id="CHEBI:141453"/>
        <dbReference type="ChEBI" id="CHEBI:456215"/>
    </reaction>
    <physiologicalReaction direction="left-to-right" evidence="1">
        <dbReference type="Rhea" id="RHEA:57049"/>
    </physiologicalReaction>
</comment>
<comment type="cofactor">
    <cofactor evidence="1">
        <name>Mg(2+)</name>
        <dbReference type="ChEBI" id="CHEBI:18420"/>
    </cofactor>
</comment>
<comment type="cofactor">
    <cofactor evidence="1">
        <name>[4Fe-4S] cluster</name>
        <dbReference type="ChEBI" id="CHEBI:49883"/>
    </cofactor>
    <text evidence="1">Binds 1 [4Fe-4S] cluster per subunit. The cluster is chelated by three Cys residues, the fourth Fe has a free coordination site that may bind a sulfur atom transferred from the persulfide of IscS.</text>
</comment>
<comment type="pathway">
    <text evidence="1">tRNA modification.</text>
</comment>
<comment type="subunit">
    <text evidence="1">Homodimer.</text>
</comment>
<comment type="subcellular location">
    <subcellularLocation>
        <location evidence="1">Cytoplasm</location>
    </subcellularLocation>
</comment>
<comment type="miscellaneous">
    <text evidence="1">The thiolation reaction likely consists of two steps: a first activation step by ATP to form an adenylated intermediate of the target base of tRNA, and a second nucleophilic substitution step of the sulfur (S) atom supplied by the hydrosulfide attached to the Fe-S cluster.</text>
</comment>
<comment type="similarity">
    <text evidence="1">Belongs to the TtcA family.</text>
</comment>
<reference key="1">
    <citation type="journal article" date="2007" name="PLoS ONE">
        <title>Genome sequencing shows that European isolates of Francisella tularensis subspecies tularensis are almost identical to US laboratory strain Schu S4.</title>
        <authorList>
            <person name="Chaudhuri R.R."/>
            <person name="Ren C.-P."/>
            <person name="Desmond L."/>
            <person name="Vincent G.A."/>
            <person name="Silman N.J."/>
            <person name="Brehm J.K."/>
            <person name="Elmore M.J."/>
            <person name="Hudson M.J."/>
            <person name="Forsman M."/>
            <person name="Isherwood K.E."/>
            <person name="Gurycova D."/>
            <person name="Minton N.P."/>
            <person name="Titball R.W."/>
            <person name="Pallen M.J."/>
            <person name="Vipond R."/>
        </authorList>
    </citation>
    <scope>NUCLEOTIDE SEQUENCE [LARGE SCALE GENOMIC DNA]</scope>
    <source>
        <strain>FSC 198</strain>
    </source>
</reference>
<accession>Q14HG9</accession>